<evidence type="ECO:0000255" key="1">
    <source>
        <dbReference type="HAMAP-Rule" id="MF_01456"/>
    </source>
</evidence>
<reference key="1">
    <citation type="journal article" date="2009" name="Vaccine">
        <title>Whole genome sequence analysis of Mycobacterium bovis bacillus Calmette-Guerin (BCG) Tokyo 172: a comparative study of BCG vaccine substrains.</title>
        <authorList>
            <person name="Seki M."/>
            <person name="Honda I."/>
            <person name="Fujita I."/>
            <person name="Yano I."/>
            <person name="Yamamoto S."/>
            <person name="Koyama A."/>
        </authorList>
    </citation>
    <scope>NUCLEOTIDE SEQUENCE [LARGE SCALE GENOMIC DNA]</scope>
    <source>
        <strain>BCG / Tokyo 172 / ATCC 35737 / TMC 1019</strain>
    </source>
</reference>
<feature type="chain" id="PRO_0000390127" description="NADH-quinone oxidoreductase subunit K">
    <location>
        <begin position="1"/>
        <end position="99"/>
    </location>
</feature>
<feature type="transmembrane region" description="Helical" evidence="1">
    <location>
        <begin position="3"/>
        <end position="23"/>
    </location>
</feature>
<feature type="transmembrane region" description="Helical" evidence="1">
    <location>
        <begin position="28"/>
        <end position="48"/>
    </location>
</feature>
<feature type="transmembrane region" description="Helical" evidence="1">
    <location>
        <begin position="59"/>
        <end position="79"/>
    </location>
</feature>
<organism>
    <name type="scientific">Mycobacterium bovis (strain BCG / Tokyo 172 / ATCC 35737 / TMC 1019)</name>
    <dbReference type="NCBI Taxonomy" id="561275"/>
    <lineage>
        <taxon>Bacteria</taxon>
        <taxon>Bacillati</taxon>
        <taxon>Actinomycetota</taxon>
        <taxon>Actinomycetes</taxon>
        <taxon>Mycobacteriales</taxon>
        <taxon>Mycobacteriaceae</taxon>
        <taxon>Mycobacterium</taxon>
        <taxon>Mycobacterium tuberculosis complex</taxon>
    </lineage>
</organism>
<comment type="function">
    <text evidence="1">NDH-1 shuttles electrons from NADH, via FMN and iron-sulfur (Fe-S) centers, to quinones in the respiratory chain. The immediate electron acceptor for the enzyme in this species is believed to be a menaquinone. Couples the redox reaction to proton translocation (for every two electrons transferred, four hydrogen ions are translocated across the cytoplasmic membrane), and thus conserves the redox energy in a proton gradient.</text>
</comment>
<comment type="catalytic activity">
    <reaction evidence="1">
        <text>a quinone + NADH + 5 H(+)(in) = a quinol + NAD(+) + 4 H(+)(out)</text>
        <dbReference type="Rhea" id="RHEA:57888"/>
        <dbReference type="ChEBI" id="CHEBI:15378"/>
        <dbReference type="ChEBI" id="CHEBI:24646"/>
        <dbReference type="ChEBI" id="CHEBI:57540"/>
        <dbReference type="ChEBI" id="CHEBI:57945"/>
        <dbReference type="ChEBI" id="CHEBI:132124"/>
    </reaction>
</comment>
<comment type="subunit">
    <text evidence="1">NDH-1 is composed of 14 different subunits. Subunits NuoA, H, J, K, L, M, N constitute the membrane sector of the complex.</text>
</comment>
<comment type="subcellular location">
    <subcellularLocation>
        <location evidence="1">Cell membrane</location>
        <topology evidence="1">Multi-pass membrane protein</topology>
    </subcellularLocation>
</comment>
<comment type="similarity">
    <text evidence="1">Belongs to the complex I subunit 4L family.</text>
</comment>
<protein>
    <recommendedName>
        <fullName evidence="1">NADH-quinone oxidoreductase subunit K</fullName>
        <ecNumber evidence="1">7.1.1.-</ecNumber>
    </recommendedName>
    <alternativeName>
        <fullName evidence="1">NADH dehydrogenase I subunit K</fullName>
    </alternativeName>
    <alternativeName>
        <fullName evidence="1">NDH-1 subunit K</fullName>
    </alternativeName>
</protein>
<proteinExistence type="inferred from homology"/>
<accession>C1AGS2</accession>
<name>NUOK_MYCBT</name>
<dbReference type="EC" id="7.1.1.-" evidence="1"/>
<dbReference type="EMBL" id="AP010918">
    <property type="protein sequence ID" value="BAH27451.1"/>
    <property type="molecule type" value="Genomic_DNA"/>
</dbReference>
<dbReference type="RefSeq" id="WP_003416452.1">
    <property type="nucleotide sequence ID" value="NZ_CP014566.1"/>
</dbReference>
<dbReference type="SMR" id="C1AGS2"/>
<dbReference type="GeneID" id="45427142"/>
<dbReference type="KEGG" id="mbt:JTY_3173"/>
<dbReference type="HOGENOM" id="CLU_144724_0_0_11"/>
<dbReference type="GO" id="GO:0030964">
    <property type="term" value="C:NADH dehydrogenase complex"/>
    <property type="evidence" value="ECO:0007669"/>
    <property type="project" value="TreeGrafter"/>
</dbReference>
<dbReference type="GO" id="GO:0005886">
    <property type="term" value="C:plasma membrane"/>
    <property type="evidence" value="ECO:0007669"/>
    <property type="project" value="UniProtKB-SubCell"/>
</dbReference>
<dbReference type="GO" id="GO:0050136">
    <property type="term" value="F:NADH:ubiquinone reductase (non-electrogenic) activity"/>
    <property type="evidence" value="ECO:0007669"/>
    <property type="project" value="UniProtKB-UniRule"/>
</dbReference>
<dbReference type="GO" id="GO:0048038">
    <property type="term" value="F:quinone binding"/>
    <property type="evidence" value="ECO:0007669"/>
    <property type="project" value="UniProtKB-KW"/>
</dbReference>
<dbReference type="GO" id="GO:0042773">
    <property type="term" value="P:ATP synthesis coupled electron transport"/>
    <property type="evidence" value="ECO:0007669"/>
    <property type="project" value="InterPro"/>
</dbReference>
<dbReference type="FunFam" id="1.10.287.3510:FF:000001">
    <property type="entry name" value="NADH-quinone oxidoreductase subunit K"/>
    <property type="match status" value="1"/>
</dbReference>
<dbReference type="Gene3D" id="1.10.287.3510">
    <property type="match status" value="1"/>
</dbReference>
<dbReference type="HAMAP" id="MF_01456">
    <property type="entry name" value="NDH1_NuoK"/>
    <property type="match status" value="1"/>
</dbReference>
<dbReference type="InterPro" id="IPR001133">
    <property type="entry name" value="NADH_UbQ_OxRdtase_chain4L/K"/>
</dbReference>
<dbReference type="InterPro" id="IPR039428">
    <property type="entry name" value="NUOK/Mnh_C1-like"/>
</dbReference>
<dbReference type="NCBIfam" id="NF004320">
    <property type="entry name" value="PRK05715.1-2"/>
    <property type="match status" value="1"/>
</dbReference>
<dbReference type="PANTHER" id="PTHR11434:SF21">
    <property type="entry name" value="NADH DEHYDROGENASE SUBUNIT 4L-RELATED"/>
    <property type="match status" value="1"/>
</dbReference>
<dbReference type="PANTHER" id="PTHR11434">
    <property type="entry name" value="NADH-UBIQUINONE OXIDOREDUCTASE SUBUNIT ND4L"/>
    <property type="match status" value="1"/>
</dbReference>
<dbReference type="Pfam" id="PF00420">
    <property type="entry name" value="Oxidored_q2"/>
    <property type="match status" value="1"/>
</dbReference>
<keyword id="KW-1003">Cell membrane</keyword>
<keyword id="KW-0472">Membrane</keyword>
<keyword id="KW-0520">NAD</keyword>
<keyword id="KW-0874">Quinone</keyword>
<keyword id="KW-1278">Translocase</keyword>
<keyword id="KW-0812">Transmembrane</keyword>
<keyword id="KW-1133">Transmembrane helix</keyword>
<keyword id="KW-0813">Transport</keyword>
<gene>
    <name evidence="1" type="primary">nuoK</name>
    <name type="ordered locus">JTY_3173</name>
</gene>
<sequence length="99" mass="10858">MNPANYLYLSVLLFTIGASGVLLRRNAIVMFMCVELMLNAVNLAFVTFARMHGHLDAQMIAFFTMVVAACEVVVGLAIIMTIFRTRKSASVDDANLLKG</sequence>